<gene>
    <name evidence="1" type="primary">prcA</name>
    <name type="ordered locus">Acel_1189</name>
</gene>
<accession>A0LU51</accession>
<name>PSA_ACIC1</name>
<reference key="1">
    <citation type="journal article" date="2009" name="Genome Res.">
        <title>Complete genome of the cellulolytic thermophile Acidothermus cellulolyticus 11B provides insights into its ecophysiological and evolutionary adaptations.</title>
        <authorList>
            <person name="Barabote R.D."/>
            <person name="Xie G."/>
            <person name="Leu D.H."/>
            <person name="Normand P."/>
            <person name="Necsulea A."/>
            <person name="Daubin V."/>
            <person name="Medigue C."/>
            <person name="Adney W.S."/>
            <person name="Xu X.C."/>
            <person name="Lapidus A."/>
            <person name="Parales R.E."/>
            <person name="Detter C."/>
            <person name="Pujic P."/>
            <person name="Bruce D."/>
            <person name="Lavire C."/>
            <person name="Challacombe J.F."/>
            <person name="Brettin T.S."/>
            <person name="Berry A.M."/>
        </authorList>
    </citation>
    <scope>NUCLEOTIDE SEQUENCE [LARGE SCALE GENOMIC DNA]</scope>
    <source>
        <strain>ATCC 43068 / DSM 8971 / 11B</strain>
    </source>
</reference>
<organism>
    <name type="scientific">Acidothermus cellulolyticus (strain ATCC 43068 / DSM 8971 / 11B)</name>
    <dbReference type="NCBI Taxonomy" id="351607"/>
    <lineage>
        <taxon>Bacteria</taxon>
        <taxon>Bacillati</taxon>
        <taxon>Actinomycetota</taxon>
        <taxon>Actinomycetes</taxon>
        <taxon>Acidothermales</taxon>
        <taxon>Acidothermaceae</taxon>
        <taxon>Acidothermus</taxon>
    </lineage>
</organism>
<protein>
    <recommendedName>
        <fullName evidence="1">Proteasome subunit alpha</fullName>
    </recommendedName>
    <alternativeName>
        <fullName evidence="1">20S proteasome alpha subunit</fullName>
    </alternativeName>
    <alternativeName>
        <fullName evidence="1">Proteasome core protein PrcA</fullName>
    </alternativeName>
</protein>
<dbReference type="EMBL" id="CP000481">
    <property type="protein sequence ID" value="ABK52961.1"/>
    <property type="molecule type" value="Genomic_DNA"/>
</dbReference>
<dbReference type="RefSeq" id="WP_011720024.1">
    <property type="nucleotide sequence ID" value="NC_008578.1"/>
</dbReference>
<dbReference type="SMR" id="A0LU51"/>
<dbReference type="FunCoup" id="A0LU51">
    <property type="interactions" value="1"/>
</dbReference>
<dbReference type="STRING" id="351607.Acel_1189"/>
<dbReference type="MEROPS" id="T01.980"/>
<dbReference type="KEGG" id="ace:Acel_1189"/>
<dbReference type="eggNOG" id="COG0638">
    <property type="taxonomic scope" value="Bacteria"/>
</dbReference>
<dbReference type="HOGENOM" id="CLU_071031_0_0_11"/>
<dbReference type="InParanoid" id="A0LU51"/>
<dbReference type="OrthoDB" id="9775643at2"/>
<dbReference type="UniPathway" id="UPA00997"/>
<dbReference type="Proteomes" id="UP000008221">
    <property type="component" value="Chromosome"/>
</dbReference>
<dbReference type="GO" id="GO:0005737">
    <property type="term" value="C:cytoplasm"/>
    <property type="evidence" value="ECO:0007669"/>
    <property type="project" value="UniProtKB-SubCell"/>
</dbReference>
<dbReference type="GO" id="GO:0019773">
    <property type="term" value="C:proteasome core complex, alpha-subunit complex"/>
    <property type="evidence" value="ECO:0007669"/>
    <property type="project" value="UniProtKB-UniRule"/>
</dbReference>
<dbReference type="GO" id="GO:0004298">
    <property type="term" value="F:threonine-type endopeptidase activity"/>
    <property type="evidence" value="ECO:0007669"/>
    <property type="project" value="InterPro"/>
</dbReference>
<dbReference type="GO" id="GO:0019941">
    <property type="term" value="P:modification-dependent protein catabolic process"/>
    <property type="evidence" value="ECO:0007669"/>
    <property type="project" value="UniProtKB-UniRule"/>
</dbReference>
<dbReference type="GO" id="GO:0010498">
    <property type="term" value="P:proteasomal protein catabolic process"/>
    <property type="evidence" value="ECO:0007669"/>
    <property type="project" value="UniProtKB-UniRule"/>
</dbReference>
<dbReference type="CDD" id="cd01906">
    <property type="entry name" value="proteasome_protease_HslV"/>
    <property type="match status" value="1"/>
</dbReference>
<dbReference type="Gene3D" id="3.60.20.10">
    <property type="entry name" value="Glutamine Phosphoribosylpyrophosphate, subunit 1, domain 1"/>
    <property type="match status" value="1"/>
</dbReference>
<dbReference type="HAMAP" id="MF_00289_B">
    <property type="entry name" value="Proteasome_A_B"/>
    <property type="match status" value="1"/>
</dbReference>
<dbReference type="InterPro" id="IPR029055">
    <property type="entry name" value="Ntn_hydrolases_N"/>
</dbReference>
<dbReference type="InterPro" id="IPR023332">
    <property type="entry name" value="Proteasome_alpha-type"/>
</dbReference>
<dbReference type="InterPro" id="IPR022296">
    <property type="entry name" value="Proteasome_asu_bac"/>
</dbReference>
<dbReference type="InterPro" id="IPR001353">
    <property type="entry name" value="Proteasome_sua/b"/>
</dbReference>
<dbReference type="NCBIfam" id="TIGR03691">
    <property type="entry name" value="20S_bact_alpha"/>
    <property type="match status" value="1"/>
</dbReference>
<dbReference type="Pfam" id="PF00227">
    <property type="entry name" value="Proteasome"/>
    <property type="match status" value="1"/>
</dbReference>
<dbReference type="SUPFAM" id="SSF56235">
    <property type="entry name" value="N-terminal nucleophile aminohydrolases (Ntn hydrolases)"/>
    <property type="match status" value="1"/>
</dbReference>
<dbReference type="PROSITE" id="PS51475">
    <property type="entry name" value="PROTEASOME_ALPHA_2"/>
    <property type="match status" value="1"/>
</dbReference>
<evidence type="ECO:0000255" key="1">
    <source>
        <dbReference type="HAMAP-Rule" id="MF_00289"/>
    </source>
</evidence>
<comment type="function">
    <text evidence="1">Component of the proteasome core, a large protease complex with broad specificity involved in protein degradation.</text>
</comment>
<comment type="activity regulation">
    <text evidence="1">The formation of the proteasomal ATPase ARC-20S proteasome complex, likely via the docking of the C-termini of ARC into the intersubunit pockets in the alpha-rings, may trigger opening of the gate for substrate entry. Interconversion between the open-gate and close-gate conformations leads to a dynamic regulation of the 20S proteasome proteolysis activity.</text>
</comment>
<comment type="pathway">
    <text evidence="1">Protein degradation; proteasomal Pup-dependent pathway.</text>
</comment>
<comment type="subunit">
    <text evidence="1">The 20S proteasome core is composed of 14 alpha and 14 beta subunits that assemble into four stacked heptameric rings, resulting in a barrel-shaped structure. The two inner rings, each composed of seven catalytic beta subunits, are sandwiched by two outer rings, each composed of seven alpha subunits. The catalytic chamber with the active sites is on the inside of the barrel. Has a gated structure, the ends of the cylinder being occluded by the N-termini of the alpha-subunits. Is capped by the proteasome-associated ATPase, ARC.</text>
</comment>
<comment type="subcellular location">
    <subcellularLocation>
        <location evidence="1">Cytoplasm</location>
    </subcellularLocation>
</comment>
<comment type="similarity">
    <text evidence="1">Belongs to the peptidase T1A family.</text>
</comment>
<keyword id="KW-0963">Cytoplasm</keyword>
<keyword id="KW-0647">Proteasome</keyword>
<keyword id="KW-1185">Reference proteome</keyword>
<sequence>MSTPFYVSPEQIMKDRAEFARKGIARGRSNVVLQYADGILFVAENTSKALHKISEVYDRIAFAAVGRYNEFENLRVAGVRLADLTGYTYDRRDVTGRTIANAYAQTLGAIFSGATEKPYEVEIVVAEVGDTPDGDSMYRLTYDGSVAEEHGYVAMGGQAEQITAQLKDRYVENLPLGEALRLAVDVLSRASDGGEPRTLTPDQLEVAALDRTRGRRAFRRFIGAQLQELLRPTS</sequence>
<feature type="chain" id="PRO_0000397131" description="Proteasome subunit alpha">
    <location>
        <begin position="1"/>
        <end position="234"/>
    </location>
</feature>
<proteinExistence type="inferred from homology"/>